<proteinExistence type="inferred from homology"/>
<sequence>MMIAGAEANVEPLVRQSSKPEFGDYQANGAMAAAKKLAMNPREFAQKILDNLDVSDMVDKLEIAGPGFINIFLKPSWLAKQANFALQAVNFGIKTAQPQTILIDYSSPNVAKEMHVGHLRSTIIGDAVVRTLEFLGNNVIRANHVGDWGTQFGMLIAYLEKMENEQASEMQLSDLEAFYRAAKESYDSDQIFAEKARNYVVKLQSGDEYCRTMWKKLVDITMHHNQENYDRLNVTLTEKDVMGESLYNPMLPEIVADLKAKGLAVEDNGAVVVFLDEFKNKDGDPMGVIIQKSDGGFLYTTTDIAAAKYRYETLKVDRALVFSDSRQAQHMQQAWLITRKAGYVPASFSLEHPFFGMMLGKDGKPFKTRSGGTVKLKDLLDEAVERADKLISARSTNLTVAEKSAVVEAVAIGSVKYSDLSKNRTTDYVFDWDNMLTFEGNTAPYMQYAYTRIRSIFARAEIDPDTLTGEMQLTEEKERTLALKLLQFEEALTAVAKEGMPHILCQYLYELAGIFSSFYEACPMLNADEAIKHSRLRLASLTAKTLKQGLDLLGIKTVEKM</sequence>
<dbReference type="EC" id="6.1.1.19" evidence="1"/>
<dbReference type="EMBL" id="AE017143">
    <property type="protein sequence ID" value="AAP95249.1"/>
    <property type="molecule type" value="Genomic_DNA"/>
</dbReference>
<dbReference type="SMR" id="Q7VP38"/>
<dbReference type="STRING" id="233412.HD_0268"/>
<dbReference type="KEGG" id="hdu:HD_0268"/>
<dbReference type="eggNOG" id="COG0018">
    <property type="taxonomic scope" value="Bacteria"/>
</dbReference>
<dbReference type="HOGENOM" id="CLU_006406_5_1_6"/>
<dbReference type="Proteomes" id="UP000001022">
    <property type="component" value="Chromosome"/>
</dbReference>
<dbReference type="GO" id="GO:0005737">
    <property type="term" value="C:cytoplasm"/>
    <property type="evidence" value="ECO:0007669"/>
    <property type="project" value="UniProtKB-SubCell"/>
</dbReference>
<dbReference type="GO" id="GO:0004814">
    <property type="term" value="F:arginine-tRNA ligase activity"/>
    <property type="evidence" value="ECO:0007669"/>
    <property type="project" value="UniProtKB-UniRule"/>
</dbReference>
<dbReference type="GO" id="GO:0005524">
    <property type="term" value="F:ATP binding"/>
    <property type="evidence" value="ECO:0007669"/>
    <property type="project" value="UniProtKB-UniRule"/>
</dbReference>
<dbReference type="GO" id="GO:0006420">
    <property type="term" value="P:arginyl-tRNA aminoacylation"/>
    <property type="evidence" value="ECO:0007669"/>
    <property type="project" value="UniProtKB-UniRule"/>
</dbReference>
<dbReference type="CDD" id="cd07956">
    <property type="entry name" value="Anticodon_Ia_Arg"/>
    <property type="match status" value="1"/>
</dbReference>
<dbReference type="CDD" id="cd00671">
    <property type="entry name" value="ArgRS_core"/>
    <property type="match status" value="1"/>
</dbReference>
<dbReference type="FunFam" id="1.10.730.10:FF:000001">
    <property type="entry name" value="Arginine--tRNA ligase"/>
    <property type="match status" value="1"/>
</dbReference>
<dbReference type="FunFam" id="3.40.50.620:FF:000030">
    <property type="entry name" value="Arginine--tRNA ligase"/>
    <property type="match status" value="1"/>
</dbReference>
<dbReference type="Gene3D" id="3.30.1360.70">
    <property type="entry name" value="Arginyl tRNA synthetase N-terminal domain"/>
    <property type="match status" value="1"/>
</dbReference>
<dbReference type="Gene3D" id="3.40.50.620">
    <property type="entry name" value="HUPs"/>
    <property type="match status" value="1"/>
</dbReference>
<dbReference type="Gene3D" id="1.10.730.10">
    <property type="entry name" value="Isoleucyl-tRNA Synthetase, Domain 1"/>
    <property type="match status" value="1"/>
</dbReference>
<dbReference type="HAMAP" id="MF_00123">
    <property type="entry name" value="Arg_tRNA_synth"/>
    <property type="match status" value="1"/>
</dbReference>
<dbReference type="InterPro" id="IPR001412">
    <property type="entry name" value="aa-tRNA-synth_I_CS"/>
</dbReference>
<dbReference type="InterPro" id="IPR001278">
    <property type="entry name" value="Arg-tRNA-ligase"/>
</dbReference>
<dbReference type="InterPro" id="IPR005148">
    <property type="entry name" value="Arg-tRNA-synth_N"/>
</dbReference>
<dbReference type="InterPro" id="IPR036695">
    <property type="entry name" value="Arg-tRNA-synth_N_sf"/>
</dbReference>
<dbReference type="InterPro" id="IPR035684">
    <property type="entry name" value="ArgRS_core"/>
</dbReference>
<dbReference type="InterPro" id="IPR008909">
    <property type="entry name" value="DALR_anticod-bd"/>
</dbReference>
<dbReference type="InterPro" id="IPR014729">
    <property type="entry name" value="Rossmann-like_a/b/a_fold"/>
</dbReference>
<dbReference type="InterPro" id="IPR009080">
    <property type="entry name" value="tRNAsynth_Ia_anticodon-bd"/>
</dbReference>
<dbReference type="NCBIfam" id="TIGR00456">
    <property type="entry name" value="argS"/>
    <property type="match status" value="1"/>
</dbReference>
<dbReference type="PANTHER" id="PTHR11956:SF5">
    <property type="entry name" value="ARGININE--TRNA LIGASE, CYTOPLASMIC"/>
    <property type="match status" value="1"/>
</dbReference>
<dbReference type="PANTHER" id="PTHR11956">
    <property type="entry name" value="ARGINYL-TRNA SYNTHETASE"/>
    <property type="match status" value="1"/>
</dbReference>
<dbReference type="Pfam" id="PF03485">
    <property type="entry name" value="Arg_tRNA_synt_N"/>
    <property type="match status" value="1"/>
</dbReference>
<dbReference type="Pfam" id="PF05746">
    <property type="entry name" value="DALR_1"/>
    <property type="match status" value="1"/>
</dbReference>
<dbReference type="Pfam" id="PF00750">
    <property type="entry name" value="tRNA-synt_1d"/>
    <property type="match status" value="1"/>
</dbReference>
<dbReference type="PRINTS" id="PR01038">
    <property type="entry name" value="TRNASYNTHARG"/>
</dbReference>
<dbReference type="SMART" id="SM01016">
    <property type="entry name" value="Arg_tRNA_synt_N"/>
    <property type="match status" value="1"/>
</dbReference>
<dbReference type="SMART" id="SM00836">
    <property type="entry name" value="DALR_1"/>
    <property type="match status" value="1"/>
</dbReference>
<dbReference type="SUPFAM" id="SSF47323">
    <property type="entry name" value="Anticodon-binding domain of a subclass of class I aminoacyl-tRNA synthetases"/>
    <property type="match status" value="1"/>
</dbReference>
<dbReference type="SUPFAM" id="SSF55190">
    <property type="entry name" value="Arginyl-tRNA synthetase (ArgRS), N-terminal 'additional' domain"/>
    <property type="match status" value="1"/>
</dbReference>
<dbReference type="SUPFAM" id="SSF52374">
    <property type="entry name" value="Nucleotidylyl transferase"/>
    <property type="match status" value="1"/>
</dbReference>
<dbReference type="PROSITE" id="PS00178">
    <property type="entry name" value="AA_TRNA_LIGASE_I"/>
    <property type="match status" value="1"/>
</dbReference>
<gene>
    <name evidence="1" type="primary">argS</name>
    <name type="ordered locus">HD_0268</name>
</gene>
<name>SYR_HAEDU</name>
<keyword id="KW-0030">Aminoacyl-tRNA synthetase</keyword>
<keyword id="KW-0067">ATP-binding</keyword>
<keyword id="KW-0963">Cytoplasm</keyword>
<keyword id="KW-0436">Ligase</keyword>
<keyword id="KW-0547">Nucleotide-binding</keyword>
<keyword id="KW-0648">Protein biosynthesis</keyword>
<keyword id="KW-1185">Reference proteome</keyword>
<reference key="1">
    <citation type="submission" date="2003-06" db="EMBL/GenBank/DDBJ databases">
        <title>The complete genome sequence of Haemophilus ducreyi.</title>
        <authorList>
            <person name="Munson R.S. Jr."/>
            <person name="Ray W.C."/>
            <person name="Mahairas G."/>
            <person name="Sabo P."/>
            <person name="Mungur R."/>
            <person name="Johnson L."/>
            <person name="Nguyen D."/>
            <person name="Wang J."/>
            <person name="Forst C."/>
            <person name="Hood L."/>
        </authorList>
    </citation>
    <scope>NUCLEOTIDE SEQUENCE [LARGE SCALE GENOMIC DNA]</scope>
    <source>
        <strain>35000HP / ATCC 700724</strain>
    </source>
</reference>
<comment type="catalytic activity">
    <reaction evidence="1">
        <text>tRNA(Arg) + L-arginine + ATP = L-arginyl-tRNA(Arg) + AMP + diphosphate</text>
        <dbReference type="Rhea" id="RHEA:20301"/>
        <dbReference type="Rhea" id="RHEA-COMP:9658"/>
        <dbReference type="Rhea" id="RHEA-COMP:9673"/>
        <dbReference type="ChEBI" id="CHEBI:30616"/>
        <dbReference type="ChEBI" id="CHEBI:32682"/>
        <dbReference type="ChEBI" id="CHEBI:33019"/>
        <dbReference type="ChEBI" id="CHEBI:78442"/>
        <dbReference type="ChEBI" id="CHEBI:78513"/>
        <dbReference type="ChEBI" id="CHEBI:456215"/>
        <dbReference type="EC" id="6.1.1.19"/>
    </reaction>
</comment>
<comment type="subunit">
    <text evidence="1">Monomer.</text>
</comment>
<comment type="subcellular location">
    <subcellularLocation>
        <location evidence="1">Cytoplasm</location>
    </subcellularLocation>
</comment>
<comment type="similarity">
    <text evidence="1">Belongs to the class-I aminoacyl-tRNA synthetase family.</text>
</comment>
<organism>
    <name type="scientific">Haemophilus ducreyi (strain 35000HP / ATCC 700724)</name>
    <dbReference type="NCBI Taxonomy" id="233412"/>
    <lineage>
        <taxon>Bacteria</taxon>
        <taxon>Pseudomonadati</taxon>
        <taxon>Pseudomonadota</taxon>
        <taxon>Gammaproteobacteria</taxon>
        <taxon>Pasteurellales</taxon>
        <taxon>Pasteurellaceae</taxon>
        <taxon>Haemophilus</taxon>
    </lineage>
</organism>
<protein>
    <recommendedName>
        <fullName evidence="1">Arginine--tRNA ligase</fullName>
        <ecNumber evidence="1">6.1.1.19</ecNumber>
    </recommendedName>
    <alternativeName>
        <fullName evidence="1">Arginyl-tRNA synthetase</fullName>
        <shortName evidence="1">ArgRS</shortName>
    </alternativeName>
</protein>
<evidence type="ECO:0000255" key="1">
    <source>
        <dbReference type="HAMAP-Rule" id="MF_00123"/>
    </source>
</evidence>
<accession>Q7VP38</accession>
<feature type="chain" id="PRO_0000151563" description="Arginine--tRNA ligase">
    <location>
        <begin position="1"/>
        <end position="561"/>
    </location>
</feature>
<feature type="short sequence motif" description="'HIGH' region">
    <location>
        <begin position="108"/>
        <end position="118"/>
    </location>
</feature>